<dbReference type="EMBL" id="AP009384">
    <property type="protein sequence ID" value="BAF90258.1"/>
    <property type="molecule type" value="Genomic_DNA"/>
</dbReference>
<dbReference type="RefSeq" id="WP_012172780.1">
    <property type="nucleotide sequence ID" value="NC_009937.1"/>
</dbReference>
<dbReference type="SMR" id="A8HT64"/>
<dbReference type="STRING" id="438753.AZC_4260"/>
<dbReference type="KEGG" id="azc:AZC_4260"/>
<dbReference type="eggNOG" id="COG0356">
    <property type="taxonomic scope" value="Bacteria"/>
</dbReference>
<dbReference type="HOGENOM" id="CLU_041018_0_2_5"/>
<dbReference type="Proteomes" id="UP000000270">
    <property type="component" value="Chromosome"/>
</dbReference>
<dbReference type="GO" id="GO:0005886">
    <property type="term" value="C:plasma membrane"/>
    <property type="evidence" value="ECO:0007669"/>
    <property type="project" value="UniProtKB-SubCell"/>
</dbReference>
<dbReference type="GO" id="GO:0045259">
    <property type="term" value="C:proton-transporting ATP synthase complex"/>
    <property type="evidence" value="ECO:0007669"/>
    <property type="project" value="UniProtKB-KW"/>
</dbReference>
<dbReference type="GO" id="GO:0046933">
    <property type="term" value="F:proton-transporting ATP synthase activity, rotational mechanism"/>
    <property type="evidence" value="ECO:0007669"/>
    <property type="project" value="UniProtKB-UniRule"/>
</dbReference>
<dbReference type="CDD" id="cd00310">
    <property type="entry name" value="ATP-synt_Fo_a_6"/>
    <property type="match status" value="1"/>
</dbReference>
<dbReference type="FunFam" id="1.20.120.220:FF:000003">
    <property type="entry name" value="ATP synthase subunit a"/>
    <property type="match status" value="1"/>
</dbReference>
<dbReference type="Gene3D" id="1.20.120.220">
    <property type="entry name" value="ATP synthase, F0 complex, subunit A"/>
    <property type="match status" value="1"/>
</dbReference>
<dbReference type="HAMAP" id="MF_01393">
    <property type="entry name" value="ATP_synth_a_bact"/>
    <property type="match status" value="1"/>
</dbReference>
<dbReference type="InterPro" id="IPR000568">
    <property type="entry name" value="ATP_synth_F0_asu"/>
</dbReference>
<dbReference type="InterPro" id="IPR023011">
    <property type="entry name" value="ATP_synth_F0_asu_AS"/>
</dbReference>
<dbReference type="InterPro" id="IPR045083">
    <property type="entry name" value="ATP_synth_F0_asu_bact/mt"/>
</dbReference>
<dbReference type="InterPro" id="IPR035908">
    <property type="entry name" value="F0_ATP_A_sf"/>
</dbReference>
<dbReference type="NCBIfam" id="TIGR01131">
    <property type="entry name" value="ATP_synt_6_or_A"/>
    <property type="match status" value="1"/>
</dbReference>
<dbReference type="NCBIfam" id="NF004482">
    <property type="entry name" value="PRK05815.2-4"/>
    <property type="match status" value="1"/>
</dbReference>
<dbReference type="PANTHER" id="PTHR11410">
    <property type="entry name" value="ATP SYNTHASE SUBUNIT A"/>
    <property type="match status" value="1"/>
</dbReference>
<dbReference type="PANTHER" id="PTHR11410:SF0">
    <property type="entry name" value="ATP SYNTHASE SUBUNIT A"/>
    <property type="match status" value="1"/>
</dbReference>
<dbReference type="Pfam" id="PF00119">
    <property type="entry name" value="ATP-synt_A"/>
    <property type="match status" value="1"/>
</dbReference>
<dbReference type="PRINTS" id="PR00123">
    <property type="entry name" value="ATPASEA"/>
</dbReference>
<dbReference type="SUPFAM" id="SSF81336">
    <property type="entry name" value="F1F0 ATP synthase subunit A"/>
    <property type="match status" value="1"/>
</dbReference>
<dbReference type="PROSITE" id="PS00449">
    <property type="entry name" value="ATPASE_A"/>
    <property type="match status" value="1"/>
</dbReference>
<comment type="function">
    <text evidence="1">Key component of the proton channel; it plays a direct role in the translocation of protons across the membrane.</text>
</comment>
<comment type="subunit">
    <text evidence="1">F-type ATPases have 2 components, CF(1) - the catalytic core - and CF(0) - the membrane proton channel. CF(1) has five subunits: alpha(3), beta(3), gamma(1), delta(1), epsilon(1). CF(0) has three main subunits: a(1), b(2) and c(9-12). The alpha and beta chains form an alternating ring which encloses part of the gamma chain. CF(1) is attached to CF(0) by a central stalk formed by the gamma and epsilon chains, while a peripheral stalk is formed by the delta and b chains.</text>
</comment>
<comment type="subcellular location">
    <subcellularLocation>
        <location evidence="1">Cell inner membrane</location>
        <topology evidence="1">Multi-pass membrane protein</topology>
    </subcellularLocation>
</comment>
<comment type="similarity">
    <text evidence="1">Belongs to the ATPase A chain family.</text>
</comment>
<gene>
    <name evidence="1" type="primary">atpB</name>
    <name type="ordered locus">AZC_4260</name>
</gene>
<accession>A8HT64</accession>
<sequence length="250" mass="27367">MTVDPIHQFEIQRYVELLRVSGVTVSFTNSAAFMVGIVALIFFFLTYATRGRTLVPGRMQSVAEMGYEFIAKMVRESAGTEGMVFFPLVFSLFVFVFVANVIGLVPYTFTITAHIVVTAALALLVIGTVVIYGFYKHGTHFLHLFVPSGVPAFLLPFIVLIEVISFLSRPISLSLRLFANMLAGHIALKVFAFFVVGLGSAGFLGWLGATLPFFMIVALTALELLVAILQAYVFAVLTSIYLNDAVHPGH</sequence>
<proteinExistence type="inferred from homology"/>
<name>ATP6_AZOC5</name>
<evidence type="ECO:0000255" key="1">
    <source>
        <dbReference type="HAMAP-Rule" id="MF_01393"/>
    </source>
</evidence>
<organism>
    <name type="scientific">Azorhizobium caulinodans (strain ATCC 43989 / DSM 5975 / JCM 20966 / LMG 6465 / NBRC 14845 / NCIMB 13405 / ORS 571)</name>
    <dbReference type="NCBI Taxonomy" id="438753"/>
    <lineage>
        <taxon>Bacteria</taxon>
        <taxon>Pseudomonadati</taxon>
        <taxon>Pseudomonadota</taxon>
        <taxon>Alphaproteobacteria</taxon>
        <taxon>Hyphomicrobiales</taxon>
        <taxon>Xanthobacteraceae</taxon>
        <taxon>Azorhizobium</taxon>
    </lineage>
</organism>
<feature type="chain" id="PRO_0000362238" description="ATP synthase subunit a">
    <location>
        <begin position="1"/>
        <end position="250"/>
    </location>
</feature>
<feature type="transmembrane region" description="Helical" evidence="1">
    <location>
        <begin position="25"/>
        <end position="45"/>
    </location>
</feature>
<feature type="transmembrane region" description="Helical" evidence="1">
    <location>
        <begin position="84"/>
        <end position="104"/>
    </location>
</feature>
<feature type="transmembrane region" description="Helical" evidence="1">
    <location>
        <begin position="115"/>
        <end position="135"/>
    </location>
</feature>
<feature type="transmembrane region" description="Helical" evidence="1">
    <location>
        <begin position="141"/>
        <end position="161"/>
    </location>
</feature>
<feature type="transmembrane region" description="Helical" evidence="1">
    <location>
        <begin position="187"/>
        <end position="209"/>
    </location>
</feature>
<feature type="transmembrane region" description="Helical" evidence="1">
    <location>
        <begin position="223"/>
        <end position="243"/>
    </location>
</feature>
<reference key="1">
    <citation type="submission" date="2007-04" db="EMBL/GenBank/DDBJ databases">
        <title>Complete genome sequence of the nitrogen-fixing bacterium Azorhizobium caulinodans ORS571.</title>
        <authorList>
            <person name="Lee K.B."/>
            <person name="Backer P.D."/>
            <person name="Aono T."/>
            <person name="Liu C.T."/>
            <person name="Suzuki S."/>
            <person name="Suzuki T."/>
            <person name="Kaneko T."/>
            <person name="Yamada M."/>
            <person name="Tabata S."/>
            <person name="Kupfer D.M."/>
            <person name="Najar F.Z."/>
            <person name="Wiley G.B."/>
            <person name="Roe B."/>
            <person name="Binnewies T."/>
            <person name="Ussery D."/>
            <person name="Vereecke D."/>
            <person name="Gevers D."/>
            <person name="Holsters M."/>
            <person name="Oyaizu H."/>
        </authorList>
    </citation>
    <scope>NUCLEOTIDE SEQUENCE [LARGE SCALE GENOMIC DNA]</scope>
    <source>
        <strain>ATCC 43989 / DSM 5975 / JCM 20966 / LMG 6465 / NBRC 14845 / NCIMB 13405 / ORS 571</strain>
    </source>
</reference>
<protein>
    <recommendedName>
        <fullName evidence="1">ATP synthase subunit a</fullName>
    </recommendedName>
    <alternativeName>
        <fullName evidence="1">ATP synthase F0 sector subunit a</fullName>
    </alternativeName>
    <alternativeName>
        <fullName evidence="1">F-ATPase subunit 6</fullName>
    </alternativeName>
</protein>
<keyword id="KW-0066">ATP synthesis</keyword>
<keyword id="KW-0997">Cell inner membrane</keyword>
<keyword id="KW-1003">Cell membrane</keyword>
<keyword id="KW-0138">CF(0)</keyword>
<keyword id="KW-0375">Hydrogen ion transport</keyword>
<keyword id="KW-0406">Ion transport</keyword>
<keyword id="KW-0472">Membrane</keyword>
<keyword id="KW-1185">Reference proteome</keyword>
<keyword id="KW-0812">Transmembrane</keyword>
<keyword id="KW-1133">Transmembrane helix</keyword>
<keyword id="KW-0813">Transport</keyword>